<feature type="chain" id="PRO_0000195403" description="Ribonuclease HI">
    <location>
        <begin position="1"/>
        <end position="158"/>
    </location>
</feature>
<feature type="domain" description="RNase H type-1" evidence="2">
    <location>
        <begin position="3"/>
        <end position="144"/>
    </location>
</feature>
<feature type="binding site" evidence="1">
    <location>
        <position position="12"/>
    </location>
    <ligand>
        <name>Mg(2+)</name>
        <dbReference type="ChEBI" id="CHEBI:18420"/>
        <label>1</label>
    </ligand>
</feature>
<feature type="binding site" evidence="1">
    <location>
        <position position="12"/>
    </location>
    <ligand>
        <name>Mg(2+)</name>
        <dbReference type="ChEBI" id="CHEBI:18420"/>
        <label>2</label>
    </ligand>
</feature>
<feature type="binding site" evidence="1">
    <location>
        <position position="50"/>
    </location>
    <ligand>
        <name>Mg(2+)</name>
        <dbReference type="ChEBI" id="CHEBI:18420"/>
        <label>1</label>
    </ligand>
</feature>
<feature type="binding site" evidence="1">
    <location>
        <position position="72"/>
    </location>
    <ligand>
        <name>Mg(2+)</name>
        <dbReference type="ChEBI" id="CHEBI:18420"/>
        <label>1</label>
    </ligand>
</feature>
<feature type="binding site" evidence="1">
    <location>
        <position position="136"/>
    </location>
    <ligand>
        <name>Mg(2+)</name>
        <dbReference type="ChEBI" id="CHEBI:18420"/>
        <label>2</label>
    </ligand>
</feature>
<feature type="strand" evidence="3">
    <location>
        <begin position="6"/>
        <end position="30"/>
    </location>
</feature>
<feature type="strand" evidence="3">
    <location>
        <begin position="33"/>
        <end position="44"/>
    </location>
</feature>
<feature type="helix" evidence="3">
    <location>
        <begin position="46"/>
        <end position="59"/>
    </location>
</feature>
<feature type="strand" evidence="3">
    <location>
        <begin position="66"/>
        <end position="71"/>
    </location>
</feature>
<feature type="helix" evidence="3">
    <location>
        <begin position="74"/>
        <end position="81"/>
    </location>
</feature>
<feature type="helix" evidence="3">
    <location>
        <begin position="83"/>
        <end position="89"/>
    </location>
</feature>
<feature type="turn" evidence="3">
    <location>
        <begin position="90"/>
        <end position="92"/>
    </location>
</feature>
<feature type="strand" evidence="3">
    <location>
        <begin position="97"/>
        <end position="99"/>
    </location>
</feature>
<feature type="helix" evidence="3">
    <location>
        <begin position="103"/>
        <end position="113"/>
    </location>
</feature>
<feature type="strand" evidence="3">
    <location>
        <begin position="116"/>
        <end position="122"/>
    </location>
</feature>
<feature type="helix" evidence="3">
    <location>
        <begin position="130"/>
        <end position="144"/>
    </location>
</feature>
<evidence type="ECO:0000255" key="1">
    <source>
        <dbReference type="HAMAP-Rule" id="MF_00042"/>
    </source>
</evidence>
<evidence type="ECO:0000255" key="2">
    <source>
        <dbReference type="PROSITE-ProRule" id="PRU00408"/>
    </source>
</evidence>
<evidence type="ECO:0007829" key="3">
    <source>
        <dbReference type="PDB" id="2E4L"/>
    </source>
</evidence>
<sequence>MTELKLIHIFTDGSCLGNPGPGGYGIVMNYKGHTKEMSDGFSLTTNNRMELLAPIVALEALKEPCKIILTSDSQYMRQGIMTWIHGWKKKGWMTSNRTPVKNVDLWKRLDKAAQLHQIDWRWVKGHAGHAENERCDQLARAAAEANPTQIDTGYQAES</sequence>
<reference key="1">
    <citation type="journal article" date="2002" name="Nat. Biotechnol.">
        <title>Genome sequence of the dissimilatory metal ion-reducing bacterium Shewanella oneidensis.</title>
        <authorList>
            <person name="Heidelberg J.F."/>
            <person name="Paulsen I.T."/>
            <person name="Nelson K.E."/>
            <person name="Gaidos E.J."/>
            <person name="Nelson W.C."/>
            <person name="Read T.D."/>
            <person name="Eisen J.A."/>
            <person name="Seshadri R."/>
            <person name="Ward N.L."/>
            <person name="Methe B.A."/>
            <person name="Clayton R.A."/>
            <person name="Meyer T."/>
            <person name="Tsapin A."/>
            <person name="Scott J."/>
            <person name="Beanan M.J."/>
            <person name="Brinkac L.M."/>
            <person name="Daugherty S.C."/>
            <person name="DeBoy R.T."/>
            <person name="Dodson R.J."/>
            <person name="Durkin A.S."/>
            <person name="Haft D.H."/>
            <person name="Kolonay J.F."/>
            <person name="Madupu R."/>
            <person name="Peterson J.D."/>
            <person name="Umayam L.A."/>
            <person name="White O."/>
            <person name="Wolf A.M."/>
            <person name="Vamathevan J.J."/>
            <person name="Weidman J.F."/>
            <person name="Impraim M."/>
            <person name="Lee K."/>
            <person name="Berry K.J."/>
            <person name="Lee C."/>
            <person name="Mueller J."/>
            <person name="Khouri H.M."/>
            <person name="Gill J."/>
            <person name="Utterback T.R."/>
            <person name="McDonald L.A."/>
            <person name="Feldblyum T.V."/>
            <person name="Smith H.O."/>
            <person name="Venter J.C."/>
            <person name="Nealson K.H."/>
            <person name="Fraser C.M."/>
        </authorList>
    </citation>
    <scope>NUCLEOTIDE SEQUENCE [LARGE SCALE GENOMIC DNA]</scope>
    <source>
        <strain>ATCC 700550 / JCM 31522 / CIP 106686 / LMG 19005 / NCIMB 14063 / MR-1</strain>
    </source>
</reference>
<gene>
    <name evidence="1" type="primary">rnhA</name>
    <name type="ordered locus">SO_2560</name>
</gene>
<comment type="function">
    <text evidence="1">Endonuclease that specifically degrades the RNA of RNA-DNA hybrids.</text>
</comment>
<comment type="catalytic activity">
    <reaction evidence="1">
        <text>Endonucleolytic cleavage to 5'-phosphomonoester.</text>
        <dbReference type="EC" id="3.1.26.4"/>
    </reaction>
</comment>
<comment type="cofactor">
    <cofactor evidence="1">
        <name>Mg(2+)</name>
        <dbReference type="ChEBI" id="CHEBI:18420"/>
    </cofactor>
    <text evidence="1">Binds 1 Mg(2+) ion per subunit. May bind a second metal ion at a regulatory site, or after substrate binding.</text>
</comment>
<comment type="subunit">
    <text evidence="1">Monomer.</text>
</comment>
<comment type="subcellular location">
    <subcellularLocation>
        <location evidence="1">Cytoplasm</location>
    </subcellularLocation>
</comment>
<comment type="similarity">
    <text evidence="1">Belongs to the RNase H family.</text>
</comment>
<dbReference type="EC" id="3.1.26.4" evidence="1"/>
<dbReference type="EMBL" id="AE014299">
    <property type="protein sequence ID" value="AAN55590.1"/>
    <property type="molecule type" value="Genomic_DNA"/>
</dbReference>
<dbReference type="RefSeq" id="NP_718146.1">
    <property type="nucleotide sequence ID" value="NC_004347.2"/>
</dbReference>
<dbReference type="RefSeq" id="WP_011072513.1">
    <property type="nucleotide sequence ID" value="NC_004347.2"/>
</dbReference>
<dbReference type="PDB" id="2E4L">
    <property type="method" value="X-ray"/>
    <property type="resolution" value="2.00 A"/>
    <property type="chains" value="A=1-158"/>
</dbReference>
<dbReference type="PDB" id="2ZQB">
    <property type="method" value="X-ray"/>
    <property type="resolution" value="2.49 A"/>
    <property type="chains" value="A/B/C/D=1-158"/>
</dbReference>
<dbReference type="PDBsum" id="2E4L"/>
<dbReference type="PDBsum" id="2ZQB"/>
<dbReference type="SMR" id="Q8EE30"/>
<dbReference type="STRING" id="211586.SO_2560"/>
<dbReference type="PaxDb" id="211586-SO_2560"/>
<dbReference type="KEGG" id="son:SO_2560"/>
<dbReference type="PATRIC" id="fig|211586.12.peg.2464"/>
<dbReference type="eggNOG" id="COG0328">
    <property type="taxonomic scope" value="Bacteria"/>
</dbReference>
<dbReference type="HOGENOM" id="CLU_030894_6_0_6"/>
<dbReference type="OrthoDB" id="7845843at2"/>
<dbReference type="PhylomeDB" id="Q8EE30"/>
<dbReference type="BioCyc" id="SONE211586:G1GMP-2347-MONOMER"/>
<dbReference type="BRENDA" id="3.1.26.4">
    <property type="organism ID" value="11242"/>
</dbReference>
<dbReference type="EvolutionaryTrace" id="Q8EE30"/>
<dbReference type="Proteomes" id="UP000008186">
    <property type="component" value="Chromosome"/>
</dbReference>
<dbReference type="GO" id="GO:0005737">
    <property type="term" value="C:cytoplasm"/>
    <property type="evidence" value="ECO:0007669"/>
    <property type="project" value="UniProtKB-SubCell"/>
</dbReference>
<dbReference type="GO" id="GO:0000287">
    <property type="term" value="F:magnesium ion binding"/>
    <property type="evidence" value="ECO:0007669"/>
    <property type="project" value="UniProtKB-UniRule"/>
</dbReference>
<dbReference type="GO" id="GO:0003676">
    <property type="term" value="F:nucleic acid binding"/>
    <property type="evidence" value="ECO:0007669"/>
    <property type="project" value="InterPro"/>
</dbReference>
<dbReference type="GO" id="GO:0004523">
    <property type="term" value="F:RNA-DNA hybrid ribonuclease activity"/>
    <property type="evidence" value="ECO:0000318"/>
    <property type="project" value="GO_Central"/>
</dbReference>
<dbReference type="GO" id="GO:0043137">
    <property type="term" value="P:DNA replication, removal of RNA primer"/>
    <property type="evidence" value="ECO:0000318"/>
    <property type="project" value="GO_Central"/>
</dbReference>
<dbReference type="CDD" id="cd09278">
    <property type="entry name" value="RNase_HI_prokaryote_like"/>
    <property type="match status" value="1"/>
</dbReference>
<dbReference type="FunFam" id="3.30.420.10:FF:000008">
    <property type="entry name" value="Ribonuclease H"/>
    <property type="match status" value="1"/>
</dbReference>
<dbReference type="Gene3D" id="3.30.420.10">
    <property type="entry name" value="Ribonuclease H-like superfamily/Ribonuclease H"/>
    <property type="match status" value="1"/>
</dbReference>
<dbReference type="HAMAP" id="MF_00042">
    <property type="entry name" value="RNase_H"/>
    <property type="match status" value="1"/>
</dbReference>
<dbReference type="InterPro" id="IPR050092">
    <property type="entry name" value="RNase_H"/>
</dbReference>
<dbReference type="InterPro" id="IPR012337">
    <property type="entry name" value="RNaseH-like_sf"/>
</dbReference>
<dbReference type="InterPro" id="IPR002156">
    <property type="entry name" value="RNaseH_domain"/>
</dbReference>
<dbReference type="InterPro" id="IPR036397">
    <property type="entry name" value="RNaseH_sf"/>
</dbReference>
<dbReference type="InterPro" id="IPR022892">
    <property type="entry name" value="RNaseHI"/>
</dbReference>
<dbReference type="NCBIfam" id="NF001236">
    <property type="entry name" value="PRK00203.1"/>
    <property type="match status" value="1"/>
</dbReference>
<dbReference type="PANTHER" id="PTHR10642">
    <property type="entry name" value="RIBONUCLEASE H1"/>
    <property type="match status" value="1"/>
</dbReference>
<dbReference type="PANTHER" id="PTHR10642:SF26">
    <property type="entry name" value="RIBONUCLEASE H1"/>
    <property type="match status" value="1"/>
</dbReference>
<dbReference type="Pfam" id="PF00075">
    <property type="entry name" value="RNase_H"/>
    <property type="match status" value="1"/>
</dbReference>
<dbReference type="SUPFAM" id="SSF53098">
    <property type="entry name" value="Ribonuclease H-like"/>
    <property type="match status" value="1"/>
</dbReference>
<dbReference type="PROSITE" id="PS50879">
    <property type="entry name" value="RNASE_H_1"/>
    <property type="match status" value="1"/>
</dbReference>
<accession>Q8EE30</accession>
<organism>
    <name type="scientific">Shewanella oneidensis (strain ATCC 700550 / JCM 31522 / CIP 106686 / LMG 19005 / NCIMB 14063 / MR-1)</name>
    <dbReference type="NCBI Taxonomy" id="211586"/>
    <lineage>
        <taxon>Bacteria</taxon>
        <taxon>Pseudomonadati</taxon>
        <taxon>Pseudomonadota</taxon>
        <taxon>Gammaproteobacteria</taxon>
        <taxon>Alteromonadales</taxon>
        <taxon>Shewanellaceae</taxon>
        <taxon>Shewanella</taxon>
    </lineage>
</organism>
<proteinExistence type="evidence at protein level"/>
<name>RNH_SHEON</name>
<keyword id="KW-0002">3D-structure</keyword>
<keyword id="KW-0963">Cytoplasm</keyword>
<keyword id="KW-0255">Endonuclease</keyword>
<keyword id="KW-0378">Hydrolase</keyword>
<keyword id="KW-0460">Magnesium</keyword>
<keyword id="KW-0479">Metal-binding</keyword>
<keyword id="KW-0540">Nuclease</keyword>
<keyword id="KW-1185">Reference proteome</keyword>
<protein>
    <recommendedName>
        <fullName evidence="1">Ribonuclease HI</fullName>
        <shortName evidence="1">RNase HI</shortName>
        <ecNumber evidence="1">3.1.26.4</ecNumber>
    </recommendedName>
</protein>